<accession>Q2HJA5</accession>
<sequence>MLETLRERLLSVQQDFTSGLKTLSDKSREAKAKNKPRTVPCLPKYSAGLELLSRYEDTWAALHRRAKECASAGERVDSEVVMLSAHWEKKQASLRDLQQQLQQLPGLIADLESLTASLTHLEASFEEVENHLLNLEDLCGQCELERHKHMQSQQLENYKKNKRKELETFKAELDAEHSQKVLEMEQTQQLKLKERQKFFEEAFQQDMEQYLSTGYLQIAERREPMGSMSSMEVNVDMLEQMDLMDISDQEALDVFLNSGGEENTLLSPISGPEASPGQDAVTLQVPTPSQAPATPPSSSSPGTDPASRDPSEGGESPVVQSDEEGVEVDTALATLHSDDSDS</sequence>
<proteinExistence type="evidence at transcript level"/>
<comment type="function">
    <text evidence="1">Component of the BLOC-1 complex, a complex that is required for normal biogenesis of lysosome-related organelles (LRO), such as platelet dense granules and melanosomes. In concert with the AP-3 complex, the BLOC-1 complex is required to target membrane protein cargos into vesicles assembled at cell bodies for delivery into neurites and nerve terminals. The BLOC-1 complex, in association with SNARE proteins, is also proposed to be involved in neurite extension. Associates with the BLOC-2 complex to facilitate the transport of TYRP1 independent of AP-3 function. Plays a role in synaptic vesicle trafficking and in neurotransmitter release. Plays a role in the regulation of cell surface exposure of DRD2. May play a role in actin cytoskeleton reorganization and neurite outgrowth. May modulate MAPK8 phosphorylation. Appears to promote neuronal transmission and viability through regulating the expression of SNAP25 and SYN1, modulating PI3-kinase-Akt signaling and influencing glutamatergic release. Regulates the expression of SYN1 through binding to its promoter. Modulates prefrontal cortical activity via the dopamine/D2 pathway (By similarity).</text>
</comment>
<comment type="subunit">
    <text evidence="1">Interacts (via its coiled coil domain) with KXD1. Interacts with CMYA5, PI4K2 and RNF151 (By similarity). Component of the biogenesis of lysosome-related organelles complex 1 (BLOC-1) composed of at least BLOC1S1, BLOC1S2, BLOC1S3, BLOC1S4, BLOC1S5, BLOC1S6, DTNBP1/BLOC1S7 and SNAPIN/BLOC1S8. Interacts directly in the complex with BLOC1S5, BLOC1S6 and SNAPIN/BLOC1S8. The BLOC-1 complex associates with the AP-3 protein complex and membrane protein cargos. This BLOC-1 complex also associates with the BLOC-2 complex in endosomes. Binds to DTNA and DTNB but may not be a physiological binding partner. Interacts with the DNA-dependent protein kinase complex DNA-PK; the interaction phosphorylates DTNBP1 in vitro. Interacts directly in this complex with XRCC5 and XRCC6. Interacts with AP3M1, AP3B2 and TRIM32. Interacts with XPO1; the interaction exports DTNBP1 out of the nucleus (By similarity).</text>
</comment>
<comment type="subcellular location">
    <subcellularLocation>
        <location evidence="1">Cytoplasm</location>
    </subcellularLocation>
    <subcellularLocation>
        <location evidence="1">Cytoplasmic vesicle membrane</location>
        <topology evidence="1">Peripheral membrane protein</topology>
        <orientation evidence="1">Cytoplasmic side</orientation>
    </subcellularLocation>
    <subcellularLocation>
        <location>Cytoplasmic vesicle</location>
        <location>Secretory vesicle</location>
        <location>Synaptic vesicle membrane</location>
        <topology>Peripheral membrane protein</topology>
        <orientation>Cytoplasmic side</orientation>
    </subcellularLocation>
    <subcellularLocation>
        <location evidence="1">Endosome membrane</location>
        <topology evidence="1">Peripheral membrane protein</topology>
        <orientation evidence="1">Cytoplasmic side</orientation>
    </subcellularLocation>
    <subcellularLocation>
        <location evidence="1">Melanosome membrane</location>
        <topology evidence="1">Peripheral membrane protein</topology>
        <orientation evidence="1">Cytoplasmic side</orientation>
    </subcellularLocation>
    <subcellularLocation>
        <location evidence="1">Nucleus</location>
    </subcellularLocation>
    <subcellularLocation>
        <location>Postsynaptic density</location>
    </subcellularLocation>
    <subcellularLocation>
        <location>Presynaptic cell membrane</location>
    </subcellularLocation>
    <subcellularLocation>
        <location evidence="1">Endoplasmic reticulum</location>
    </subcellularLocation>
    <text evidence="1">Mainly cytoplasmic but shuttles between the cytoplasm and nucleus. Exported out of the nucleus via its NES in a XPO1-dependent manner. Nuclear localization is required for regulation of the expression of genes such as SYN1 (By similarity). Detected in neuron cell bodies, axons and dendrites. Detected at synapses, at postsynaptic density, at presynaptic vesicle membranes and microtubules. Detected at tubulovesicular elements in the vicinity of the Golgi apparatus and of melanosomes. Occasionally detected at the membrane of pigmented melanosomes in cultured melanoma cells. The BLOC-1 complex associates with the BLOC-2 complex in early endosome-associated tubules. Associated with the AP-3 complex at presynaptic terminals (By similarity).</text>
</comment>
<comment type="PTM">
    <text evidence="1">Ubiquitinated by TRIM32. Ubiquitination leads to DTNBP1 degradation.</text>
</comment>
<comment type="similarity">
    <text evidence="6">Belongs to the dysbindin family.</text>
</comment>
<name>DTBP1_BOVIN</name>
<evidence type="ECO:0000250" key="1"/>
<evidence type="ECO:0000250" key="2">
    <source>
        <dbReference type="UniProtKB" id="Q91WZ8"/>
    </source>
</evidence>
<evidence type="ECO:0000250" key="3">
    <source>
        <dbReference type="UniProtKB" id="Q96EV8"/>
    </source>
</evidence>
<evidence type="ECO:0000255" key="4"/>
<evidence type="ECO:0000256" key="5">
    <source>
        <dbReference type="SAM" id="MobiDB-lite"/>
    </source>
</evidence>
<evidence type="ECO:0000305" key="6"/>
<feature type="chain" id="PRO_0000267209" description="Dysbindin">
    <location>
        <begin position="1"/>
        <end position="342"/>
    </location>
</feature>
<feature type="region of interest" description="Disordered" evidence="5">
    <location>
        <begin position="263"/>
        <end position="342"/>
    </location>
</feature>
<feature type="coiled-coil region" evidence="4">
    <location>
        <begin position="83"/>
        <end position="180"/>
    </location>
</feature>
<feature type="short sequence motif" description="Nuclear export signal" evidence="1">
    <location>
        <begin position="243"/>
        <end position="256"/>
    </location>
</feature>
<feature type="compositionally biased region" description="Low complexity" evidence="5">
    <location>
        <begin position="286"/>
        <end position="305"/>
    </location>
</feature>
<feature type="modified residue" description="Phosphoserine" evidence="3">
    <location>
        <position position="11"/>
    </location>
</feature>
<feature type="modified residue" description="Phosphoserine" evidence="3">
    <location>
        <position position="316"/>
    </location>
</feature>
<feature type="modified residue" description="Phosphoserine" evidence="3">
    <location>
        <position position="321"/>
    </location>
</feature>
<feature type="modified residue" description="Phosphoserine" evidence="2">
    <location>
        <position position="340"/>
    </location>
</feature>
<keyword id="KW-1003">Cell membrane</keyword>
<keyword id="KW-0966">Cell projection</keyword>
<keyword id="KW-0175">Coiled coil</keyword>
<keyword id="KW-0963">Cytoplasm</keyword>
<keyword id="KW-0968">Cytoplasmic vesicle</keyword>
<keyword id="KW-0256">Endoplasmic reticulum</keyword>
<keyword id="KW-0967">Endosome</keyword>
<keyword id="KW-0472">Membrane</keyword>
<keyword id="KW-0539">Nucleus</keyword>
<keyword id="KW-0597">Phosphoprotein</keyword>
<keyword id="KW-1185">Reference proteome</keyword>
<keyword id="KW-0770">Synapse</keyword>
<keyword id="KW-0832">Ubl conjugation</keyword>
<dbReference type="EMBL" id="BC113232">
    <property type="protein sequence ID" value="AAI13233.1"/>
    <property type="molecule type" value="mRNA"/>
</dbReference>
<dbReference type="RefSeq" id="NP_001039412.1">
    <property type="nucleotide sequence ID" value="NM_001045947.1"/>
</dbReference>
<dbReference type="SMR" id="Q2HJA5"/>
<dbReference type="FunCoup" id="Q2HJA5">
    <property type="interactions" value="955"/>
</dbReference>
<dbReference type="STRING" id="9913.ENSBTAP00000059539"/>
<dbReference type="PaxDb" id="9913-ENSBTAP00000051067"/>
<dbReference type="GeneID" id="506612"/>
<dbReference type="KEGG" id="bta:506612"/>
<dbReference type="CTD" id="84062"/>
<dbReference type="VEuPathDB" id="HostDB:ENSBTAG00000012939"/>
<dbReference type="eggNOG" id="ENOG502QRS9">
    <property type="taxonomic scope" value="Eukaryota"/>
</dbReference>
<dbReference type="InParanoid" id="Q2HJA5"/>
<dbReference type="OrthoDB" id="2445127at2759"/>
<dbReference type="Reactome" id="R-BTA-432722">
    <property type="pathway name" value="Golgi Associated Vesicle Biogenesis"/>
</dbReference>
<dbReference type="Proteomes" id="UP000009136">
    <property type="component" value="Chromosome 23"/>
</dbReference>
<dbReference type="Bgee" id="ENSBTAG00000012939">
    <property type="expression patterns" value="Expressed in temporal cortex and 104 other cell types or tissues"/>
</dbReference>
<dbReference type="GO" id="GO:0030424">
    <property type="term" value="C:axon"/>
    <property type="evidence" value="ECO:0000250"/>
    <property type="project" value="UniProtKB"/>
</dbReference>
<dbReference type="GO" id="GO:1904115">
    <property type="term" value="C:axon cytoplasm"/>
    <property type="evidence" value="ECO:0007669"/>
    <property type="project" value="GOC"/>
</dbReference>
<dbReference type="GO" id="GO:0031083">
    <property type="term" value="C:BLOC-1 complex"/>
    <property type="evidence" value="ECO:0000250"/>
    <property type="project" value="UniProtKB"/>
</dbReference>
<dbReference type="GO" id="GO:0043197">
    <property type="term" value="C:dendritic spine"/>
    <property type="evidence" value="ECO:0000250"/>
    <property type="project" value="UniProtKB"/>
</dbReference>
<dbReference type="GO" id="GO:0005789">
    <property type="term" value="C:endoplasmic reticulum membrane"/>
    <property type="evidence" value="ECO:0000250"/>
    <property type="project" value="UniProtKB"/>
</dbReference>
<dbReference type="GO" id="GO:0010008">
    <property type="term" value="C:endosome membrane"/>
    <property type="evidence" value="ECO:0007669"/>
    <property type="project" value="UniProtKB-SubCell"/>
</dbReference>
<dbReference type="GO" id="GO:0030426">
    <property type="term" value="C:growth cone"/>
    <property type="evidence" value="ECO:0000250"/>
    <property type="project" value="UniProtKB"/>
</dbReference>
<dbReference type="GO" id="GO:0033162">
    <property type="term" value="C:melanosome membrane"/>
    <property type="evidence" value="ECO:0007669"/>
    <property type="project" value="UniProtKB-SubCell"/>
</dbReference>
<dbReference type="GO" id="GO:0043005">
    <property type="term" value="C:neuron projection"/>
    <property type="evidence" value="ECO:0000250"/>
    <property type="project" value="UniProtKB"/>
</dbReference>
<dbReference type="GO" id="GO:0005634">
    <property type="term" value="C:nucleus"/>
    <property type="evidence" value="ECO:0007669"/>
    <property type="project" value="UniProtKB-SubCell"/>
</dbReference>
<dbReference type="GO" id="GO:0005886">
    <property type="term" value="C:plasma membrane"/>
    <property type="evidence" value="ECO:0000318"/>
    <property type="project" value="GO_Central"/>
</dbReference>
<dbReference type="GO" id="GO:0014069">
    <property type="term" value="C:postsynaptic density"/>
    <property type="evidence" value="ECO:0000250"/>
    <property type="project" value="UniProtKB"/>
</dbReference>
<dbReference type="GO" id="GO:0042734">
    <property type="term" value="C:presynaptic membrane"/>
    <property type="evidence" value="ECO:0007669"/>
    <property type="project" value="UniProtKB-SubCell"/>
</dbReference>
<dbReference type="GO" id="GO:0030672">
    <property type="term" value="C:synaptic vesicle membrane"/>
    <property type="evidence" value="ECO:0000250"/>
    <property type="project" value="UniProtKB"/>
</dbReference>
<dbReference type="GO" id="GO:0030036">
    <property type="term" value="P:actin cytoskeleton organization"/>
    <property type="evidence" value="ECO:0000250"/>
    <property type="project" value="UniProtKB"/>
</dbReference>
<dbReference type="GO" id="GO:0008089">
    <property type="term" value="P:anterograde axonal transport"/>
    <property type="evidence" value="ECO:0000250"/>
    <property type="project" value="UniProtKB"/>
</dbReference>
<dbReference type="GO" id="GO:0048490">
    <property type="term" value="P:anterograde synaptic vesicle transport"/>
    <property type="evidence" value="ECO:0000250"/>
    <property type="project" value="UniProtKB"/>
</dbReference>
<dbReference type="GO" id="GO:0031175">
    <property type="term" value="P:neuron projection development"/>
    <property type="evidence" value="ECO:0000250"/>
    <property type="project" value="UniProtKB"/>
</dbReference>
<dbReference type="GO" id="GO:0048812">
    <property type="term" value="P:neuron projection morphogenesis"/>
    <property type="evidence" value="ECO:0000250"/>
    <property type="project" value="UniProtKB"/>
</dbReference>
<dbReference type="GO" id="GO:0060155">
    <property type="term" value="P:platelet dense granule organization"/>
    <property type="evidence" value="ECO:0000318"/>
    <property type="project" value="GO_Central"/>
</dbReference>
<dbReference type="GO" id="GO:0010628">
    <property type="term" value="P:positive regulation of gene expression"/>
    <property type="evidence" value="ECO:0000250"/>
    <property type="project" value="UniProtKB"/>
</dbReference>
<dbReference type="GO" id="GO:0001956">
    <property type="term" value="P:positive regulation of neurotransmitter secretion"/>
    <property type="evidence" value="ECO:0000250"/>
    <property type="project" value="UniProtKB"/>
</dbReference>
<dbReference type="GO" id="GO:0060159">
    <property type="term" value="P:regulation of dopamine receptor signaling pathway"/>
    <property type="evidence" value="ECO:0000250"/>
    <property type="project" value="UniProtKB"/>
</dbReference>
<dbReference type="GO" id="GO:0014059">
    <property type="term" value="P:regulation of dopamine secretion"/>
    <property type="evidence" value="ECO:0000250"/>
    <property type="project" value="UniProtKB"/>
</dbReference>
<dbReference type="GO" id="GO:0009966">
    <property type="term" value="P:regulation of signal transduction"/>
    <property type="evidence" value="ECO:0000318"/>
    <property type="project" value="GO_Central"/>
</dbReference>
<dbReference type="GO" id="GO:2000300">
    <property type="term" value="P:regulation of synaptic vesicle exocytosis"/>
    <property type="evidence" value="ECO:0000318"/>
    <property type="project" value="GO_Central"/>
</dbReference>
<dbReference type="InterPro" id="IPR007531">
    <property type="entry name" value="Dysbindin"/>
</dbReference>
<dbReference type="PANTHER" id="PTHR16294:SF5">
    <property type="entry name" value="DYSBINDIN"/>
    <property type="match status" value="1"/>
</dbReference>
<dbReference type="PANTHER" id="PTHR16294">
    <property type="entry name" value="DYSTROBREVIN BINDING PROTEIN 1 DYSBINDIN"/>
    <property type="match status" value="1"/>
</dbReference>
<dbReference type="Pfam" id="PF04440">
    <property type="entry name" value="Dysbindin"/>
    <property type="match status" value="1"/>
</dbReference>
<reference key="1">
    <citation type="submission" date="2006-02" db="EMBL/GenBank/DDBJ databases">
        <authorList>
            <consortium name="NIH - Mammalian Gene Collection (MGC) project"/>
        </authorList>
    </citation>
    <scope>NUCLEOTIDE SEQUENCE [LARGE SCALE MRNA]</scope>
    <source>
        <strain>Hereford</strain>
        <tissue>Uterus</tissue>
    </source>
</reference>
<gene>
    <name type="primary">DTNBP1</name>
    <name type="synonym">BLOC1S8</name>
</gene>
<protein>
    <recommendedName>
        <fullName>Dysbindin</fullName>
    </recommendedName>
    <alternativeName>
        <fullName>Biogenesis of lysosome-related organelles complex 1 subunit 8</fullName>
        <shortName>BLOC-1 subunit 8</shortName>
    </alternativeName>
    <alternativeName>
        <fullName>Dysbindin-1</fullName>
    </alternativeName>
    <alternativeName>
        <fullName>Dystrobrevin-binding protein 1</fullName>
    </alternativeName>
</protein>
<organism>
    <name type="scientific">Bos taurus</name>
    <name type="common">Bovine</name>
    <dbReference type="NCBI Taxonomy" id="9913"/>
    <lineage>
        <taxon>Eukaryota</taxon>
        <taxon>Metazoa</taxon>
        <taxon>Chordata</taxon>
        <taxon>Craniata</taxon>
        <taxon>Vertebrata</taxon>
        <taxon>Euteleostomi</taxon>
        <taxon>Mammalia</taxon>
        <taxon>Eutheria</taxon>
        <taxon>Laurasiatheria</taxon>
        <taxon>Artiodactyla</taxon>
        <taxon>Ruminantia</taxon>
        <taxon>Pecora</taxon>
        <taxon>Bovidae</taxon>
        <taxon>Bovinae</taxon>
        <taxon>Bos</taxon>
    </lineage>
</organism>